<protein>
    <recommendedName>
        <fullName evidence="1">Chaperonin GroEL 7</fullName>
        <ecNumber evidence="1">5.6.1.7</ecNumber>
    </recommendedName>
    <alternativeName>
        <fullName evidence="1">60 kDa chaperonin 7</fullName>
    </alternativeName>
    <alternativeName>
        <fullName evidence="1">Chaperonin-60 7</fullName>
        <shortName evidence="1">Cpn60 7</shortName>
    </alternativeName>
</protein>
<comment type="function">
    <text evidence="1">Together with its co-chaperonin GroES, plays an essential role in assisting protein folding. The GroEL-GroES system forms a nano-cage that allows encapsulation of the non-native substrate proteins and provides a physical environment optimized to promote and accelerate protein folding.</text>
</comment>
<comment type="catalytic activity">
    <reaction evidence="1">
        <text>ATP + H2O + a folded polypeptide = ADP + phosphate + an unfolded polypeptide.</text>
        <dbReference type="EC" id="5.6.1.7"/>
    </reaction>
</comment>
<comment type="subunit">
    <text evidence="1">Forms a cylinder of 14 subunits composed of two heptameric rings stacked back-to-back. Interacts with the co-chaperonin GroES.</text>
</comment>
<comment type="subcellular location">
    <subcellularLocation>
        <location evidence="1">Cytoplasm</location>
    </subcellularLocation>
</comment>
<comment type="similarity">
    <text evidence="1">Belongs to the chaperonin (HSP60) family.</text>
</comment>
<feature type="chain" id="PRO_0000063300" description="Chaperonin GroEL 7">
    <location>
        <begin position="1"/>
        <end position="543"/>
    </location>
</feature>
<feature type="binding site" evidence="1">
    <location>
        <begin position="30"/>
        <end position="33"/>
    </location>
    <ligand>
        <name>ATP</name>
        <dbReference type="ChEBI" id="CHEBI:30616"/>
    </ligand>
</feature>
<feature type="binding site" evidence="1">
    <location>
        <position position="51"/>
    </location>
    <ligand>
        <name>ATP</name>
        <dbReference type="ChEBI" id="CHEBI:30616"/>
    </ligand>
</feature>
<feature type="binding site" evidence="1">
    <location>
        <begin position="87"/>
        <end position="91"/>
    </location>
    <ligand>
        <name>ATP</name>
        <dbReference type="ChEBI" id="CHEBI:30616"/>
    </ligand>
</feature>
<feature type="binding site" evidence="1">
    <location>
        <position position="415"/>
    </location>
    <ligand>
        <name>ATP</name>
        <dbReference type="ChEBI" id="CHEBI:30616"/>
    </ligand>
</feature>
<feature type="binding site" evidence="1">
    <location>
        <position position="496"/>
    </location>
    <ligand>
        <name>ATP</name>
        <dbReference type="ChEBI" id="CHEBI:30616"/>
    </ligand>
</feature>
<proteinExistence type="inferred from homology"/>
<accession>Q89DA6</accession>
<name>CH607_BRADU</name>
<gene>
    <name evidence="1" type="primary">groEL7</name>
    <name evidence="1" type="synonym">groL7</name>
    <name type="ordered locus">blr7533</name>
</gene>
<organism>
    <name type="scientific">Bradyrhizobium diazoefficiens (strain JCM 10833 / BCRC 13528 / IAM 13628 / NBRC 14792 / USDA 110)</name>
    <dbReference type="NCBI Taxonomy" id="224911"/>
    <lineage>
        <taxon>Bacteria</taxon>
        <taxon>Pseudomonadati</taxon>
        <taxon>Pseudomonadota</taxon>
        <taxon>Alphaproteobacteria</taxon>
        <taxon>Hyphomicrobiales</taxon>
        <taxon>Nitrobacteraceae</taxon>
        <taxon>Bradyrhizobium</taxon>
    </lineage>
</organism>
<evidence type="ECO:0000255" key="1">
    <source>
        <dbReference type="HAMAP-Rule" id="MF_00600"/>
    </source>
</evidence>
<reference key="1">
    <citation type="journal article" date="2002" name="DNA Res.">
        <title>Complete genomic sequence of nitrogen-fixing symbiotic bacterium Bradyrhizobium japonicum USDA110.</title>
        <authorList>
            <person name="Kaneko T."/>
            <person name="Nakamura Y."/>
            <person name="Sato S."/>
            <person name="Minamisawa K."/>
            <person name="Uchiumi T."/>
            <person name="Sasamoto S."/>
            <person name="Watanabe A."/>
            <person name="Idesawa K."/>
            <person name="Iriguchi M."/>
            <person name="Kawashima K."/>
            <person name="Kohara M."/>
            <person name="Matsumoto M."/>
            <person name="Shimpo S."/>
            <person name="Tsuruoka H."/>
            <person name="Wada T."/>
            <person name="Yamada M."/>
            <person name="Tabata S."/>
        </authorList>
    </citation>
    <scope>NUCLEOTIDE SEQUENCE [LARGE SCALE GENOMIC DNA]</scope>
    <source>
        <strain>JCM 10833 / BCRC 13528 / IAM 13628 / NBRC 14792 / USDA 110</strain>
    </source>
</reference>
<keyword id="KW-0067">ATP-binding</keyword>
<keyword id="KW-0143">Chaperone</keyword>
<keyword id="KW-0963">Cytoplasm</keyword>
<keyword id="KW-0413">Isomerase</keyword>
<keyword id="KW-0547">Nucleotide-binding</keyword>
<keyword id="KW-1185">Reference proteome</keyword>
<dbReference type="EC" id="5.6.1.7" evidence="1"/>
<dbReference type="EMBL" id="BA000040">
    <property type="protein sequence ID" value="BAC52798.1"/>
    <property type="molecule type" value="Genomic_DNA"/>
</dbReference>
<dbReference type="RefSeq" id="NP_774173.1">
    <property type="nucleotide sequence ID" value="NC_004463.1"/>
</dbReference>
<dbReference type="RefSeq" id="WP_011090265.1">
    <property type="nucleotide sequence ID" value="NC_004463.1"/>
</dbReference>
<dbReference type="SMR" id="Q89DA6"/>
<dbReference type="FunCoup" id="Q89DA6">
    <property type="interactions" value="1055"/>
</dbReference>
<dbReference type="STRING" id="224911.AAV28_35340"/>
<dbReference type="EnsemblBacteria" id="BAC52798">
    <property type="protein sequence ID" value="BAC52798"/>
    <property type="gene ID" value="BAC52798"/>
</dbReference>
<dbReference type="GeneID" id="46494486"/>
<dbReference type="KEGG" id="bja:blr7533"/>
<dbReference type="PATRIC" id="fig|224911.44.peg.7636"/>
<dbReference type="eggNOG" id="COG0459">
    <property type="taxonomic scope" value="Bacteria"/>
</dbReference>
<dbReference type="HOGENOM" id="CLU_016503_3_0_5"/>
<dbReference type="InParanoid" id="Q89DA6"/>
<dbReference type="OrthoDB" id="9766614at2"/>
<dbReference type="PhylomeDB" id="Q89DA6"/>
<dbReference type="Proteomes" id="UP000002526">
    <property type="component" value="Chromosome"/>
</dbReference>
<dbReference type="GO" id="GO:1990220">
    <property type="term" value="C:GroEL-GroES complex"/>
    <property type="evidence" value="ECO:0000318"/>
    <property type="project" value="GO_Central"/>
</dbReference>
<dbReference type="GO" id="GO:0005524">
    <property type="term" value="F:ATP binding"/>
    <property type="evidence" value="ECO:0000318"/>
    <property type="project" value="GO_Central"/>
</dbReference>
<dbReference type="GO" id="GO:0140662">
    <property type="term" value="F:ATP-dependent protein folding chaperone"/>
    <property type="evidence" value="ECO:0007669"/>
    <property type="project" value="InterPro"/>
</dbReference>
<dbReference type="GO" id="GO:0016853">
    <property type="term" value="F:isomerase activity"/>
    <property type="evidence" value="ECO:0007669"/>
    <property type="project" value="UniProtKB-KW"/>
</dbReference>
<dbReference type="GO" id="GO:0051082">
    <property type="term" value="F:unfolded protein binding"/>
    <property type="evidence" value="ECO:0000318"/>
    <property type="project" value="GO_Central"/>
</dbReference>
<dbReference type="GO" id="GO:0051085">
    <property type="term" value="P:chaperone cofactor-dependent protein refolding"/>
    <property type="evidence" value="ECO:0000318"/>
    <property type="project" value="GO_Central"/>
</dbReference>
<dbReference type="GO" id="GO:0042026">
    <property type="term" value="P:protein refolding"/>
    <property type="evidence" value="ECO:0007669"/>
    <property type="project" value="UniProtKB-UniRule"/>
</dbReference>
<dbReference type="GO" id="GO:0009408">
    <property type="term" value="P:response to heat"/>
    <property type="evidence" value="ECO:0000318"/>
    <property type="project" value="GO_Central"/>
</dbReference>
<dbReference type="CDD" id="cd03344">
    <property type="entry name" value="GroEL"/>
    <property type="match status" value="1"/>
</dbReference>
<dbReference type="FunFam" id="1.10.560.10:FF:000001">
    <property type="entry name" value="60 kDa chaperonin"/>
    <property type="match status" value="1"/>
</dbReference>
<dbReference type="FunFam" id="3.50.7.10:FF:000001">
    <property type="entry name" value="60 kDa chaperonin"/>
    <property type="match status" value="1"/>
</dbReference>
<dbReference type="Gene3D" id="3.50.7.10">
    <property type="entry name" value="GroEL"/>
    <property type="match status" value="1"/>
</dbReference>
<dbReference type="Gene3D" id="1.10.560.10">
    <property type="entry name" value="GroEL-like equatorial domain"/>
    <property type="match status" value="1"/>
</dbReference>
<dbReference type="Gene3D" id="3.30.260.10">
    <property type="entry name" value="TCP-1-like chaperonin intermediate domain"/>
    <property type="match status" value="1"/>
</dbReference>
<dbReference type="HAMAP" id="MF_00600">
    <property type="entry name" value="CH60"/>
    <property type="match status" value="1"/>
</dbReference>
<dbReference type="InterPro" id="IPR018370">
    <property type="entry name" value="Chaperonin_Cpn60_CS"/>
</dbReference>
<dbReference type="InterPro" id="IPR001844">
    <property type="entry name" value="Cpn60/GroEL"/>
</dbReference>
<dbReference type="InterPro" id="IPR002423">
    <property type="entry name" value="Cpn60/GroEL/TCP-1"/>
</dbReference>
<dbReference type="InterPro" id="IPR027409">
    <property type="entry name" value="GroEL-like_apical_dom_sf"/>
</dbReference>
<dbReference type="InterPro" id="IPR027413">
    <property type="entry name" value="GROEL-like_equatorial_sf"/>
</dbReference>
<dbReference type="InterPro" id="IPR027410">
    <property type="entry name" value="TCP-1-like_intermed_sf"/>
</dbReference>
<dbReference type="NCBIfam" id="TIGR02348">
    <property type="entry name" value="GroEL"/>
    <property type="match status" value="1"/>
</dbReference>
<dbReference type="NCBIfam" id="NF000592">
    <property type="entry name" value="PRK00013.1"/>
    <property type="match status" value="1"/>
</dbReference>
<dbReference type="NCBIfam" id="NF009487">
    <property type="entry name" value="PRK12849.1"/>
    <property type="match status" value="1"/>
</dbReference>
<dbReference type="NCBIfam" id="NF009488">
    <property type="entry name" value="PRK12850.1"/>
    <property type="match status" value="1"/>
</dbReference>
<dbReference type="NCBIfam" id="NF009489">
    <property type="entry name" value="PRK12851.1"/>
    <property type="match status" value="1"/>
</dbReference>
<dbReference type="PANTHER" id="PTHR45633">
    <property type="entry name" value="60 KDA HEAT SHOCK PROTEIN, MITOCHONDRIAL"/>
    <property type="match status" value="1"/>
</dbReference>
<dbReference type="Pfam" id="PF00118">
    <property type="entry name" value="Cpn60_TCP1"/>
    <property type="match status" value="1"/>
</dbReference>
<dbReference type="PRINTS" id="PR00298">
    <property type="entry name" value="CHAPERONIN60"/>
</dbReference>
<dbReference type="SUPFAM" id="SSF52029">
    <property type="entry name" value="GroEL apical domain-like"/>
    <property type="match status" value="1"/>
</dbReference>
<dbReference type="SUPFAM" id="SSF48592">
    <property type="entry name" value="GroEL equatorial domain-like"/>
    <property type="match status" value="1"/>
</dbReference>
<dbReference type="SUPFAM" id="SSF54849">
    <property type="entry name" value="GroEL-intermediate domain like"/>
    <property type="match status" value="1"/>
</dbReference>
<dbReference type="PROSITE" id="PS00296">
    <property type="entry name" value="CHAPERONINS_CPN60"/>
    <property type="match status" value="1"/>
</dbReference>
<sequence>MAAKDVKFSGDARERMLRGVDILANAVKVTLGPKGRNVVIEKSFGAPRITKDGVTVAKEIELEDKFENMGAQMVREVASKTNDLAGDGTTTATVLAQAIVREGAKAVAAGMNPMDLKRGIDIAVAAVIKDIEKRAKPVASSSEVAQVGTISANGDAAIGKMIAQAMQKVGNEGVITVEENKSLDTEVDIVEGMKFDRGYLSPYFVTNAEKMTAELEDAYILLHEKKLSGLQAMLPVLEAVVQSGKPLVIIAEDVEGEALATLVVNRLRGGLKVAAVKAPGFGDRRKAMLEDLAILTGGQLISEELGIKLENVTVKMLGRAKKVVIDKENTTIVNGAGKKPDIEARVGQIKAQIEETTSDYDREKLQERLAKLAGGVAVIRVGGATEIEVKEKKDRVEDALNATRAAVQEGIVPGGGVALLRAKKAVGRLTNANDDVQAGINIVLKALEAPIRQISENAGVEGSIVVGKILENKSETFGFDAQNEDYVDMVEKGIIDPAKVVRTALQDASSVAGLLVTTEAMVAEAPKKDAPPAMPAGGGMGGF</sequence>